<keyword id="KW-0067">ATP-binding</keyword>
<keyword id="KW-0997">Cell inner membrane</keyword>
<keyword id="KW-1003">Cell membrane</keyword>
<keyword id="KW-0378">Hydrolase</keyword>
<keyword id="KW-0418">Kinase</keyword>
<keyword id="KW-0472">Membrane</keyword>
<keyword id="KW-0547">Nucleotide-binding</keyword>
<keyword id="KW-0597">Phosphoprotein</keyword>
<keyword id="KW-0904">Protein phosphatase</keyword>
<keyword id="KW-0808">Transferase</keyword>
<keyword id="KW-0812">Transmembrane</keyword>
<keyword id="KW-1133">Transmembrane helix</keyword>
<keyword id="KW-0902">Two-component regulatory system</keyword>
<organism>
    <name type="scientific">Vibrio harveyi</name>
    <name type="common">Beneckea harveyi</name>
    <dbReference type="NCBI Taxonomy" id="669"/>
    <lineage>
        <taxon>Bacteria</taxon>
        <taxon>Pseudomonadati</taxon>
        <taxon>Pseudomonadota</taxon>
        <taxon>Gammaproteobacteria</taxon>
        <taxon>Vibrionales</taxon>
        <taxon>Vibrionaceae</taxon>
        <taxon>Vibrio</taxon>
    </lineage>
</organism>
<gene>
    <name type="primary">luxN</name>
</gene>
<dbReference type="EC" id="2.7.13.3"/>
<dbReference type="EC" id="3.1.3.-"/>
<dbReference type="EMBL" id="L13940">
    <property type="protein sequence ID" value="AAC36808.1"/>
    <property type="molecule type" value="Genomic_RNA"/>
</dbReference>
<dbReference type="PIR" id="S37350">
    <property type="entry name" value="S37350"/>
</dbReference>
<dbReference type="SMR" id="P0C5S6"/>
<dbReference type="STRING" id="669.AL538_03410"/>
<dbReference type="BindingDB" id="P0C5S6"/>
<dbReference type="ChEMBL" id="CHEMBL1795163"/>
<dbReference type="BRENDA" id="2.7.13.3">
    <property type="organism ID" value="6632"/>
</dbReference>
<dbReference type="GO" id="GO:0005886">
    <property type="term" value="C:plasma membrane"/>
    <property type="evidence" value="ECO:0007669"/>
    <property type="project" value="UniProtKB-SubCell"/>
</dbReference>
<dbReference type="GO" id="GO:0005524">
    <property type="term" value="F:ATP binding"/>
    <property type="evidence" value="ECO:0007669"/>
    <property type="project" value="UniProtKB-KW"/>
</dbReference>
<dbReference type="GO" id="GO:0004721">
    <property type="term" value="F:phosphoprotein phosphatase activity"/>
    <property type="evidence" value="ECO:0007669"/>
    <property type="project" value="UniProtKB-KW"/>
</dbReference>
<dbReference type="GO" id="GO:0000155">
    <property type="term" value="F:phosphorelay sensor kinase activity"/>
    <property type="evidence" value="ECO:0007669"/>
    <property type="project" value="InterPro"/>
</dbReference>
<dbReference type="CDD" id="cd00075">
    <property type="entry name" value="HATPase"/>
    <property type="match status" value="1"/>
</dbReference>
<dbReference type="CDD" id="cd00082">
    <property type="entry name" value="HisKA"/>
    <property type="match status" value="1"/>
</dbReference>
<dbReference type="CDD" id="cd17546">
    <property type="entry name" value="REC_hyHK_CKI1_RcsC-like"/>
    <property type="match status" value="1"/>
</dbReference>
<dbReference type="FunFam" id="3.30.565.10:FF:000168">
    <property type="entry name" value="Autoinducer 1 sensor kinase/phosphatase LuxN"/>
    <property type="match status" value="1"/>
</dbReference>
<dbReference type="Gene3D" id="1.10.287.130">
    <property type="match status" value="1"/>
</dbReference>
<dbReference type="Gene3D" id="3.40.50.2300">
    <property type="match status" value="1"/>
</dbReference>
<dbReference type="Gene3D" id="3.30.565.10">
    <property type="entry name" value="Histidine kinase-like ATPase, C-terminal domain"/>
    <property type="match status" value="1"/>
</dbReference>
<dbReference type="InterPro" id="IPR011006">
    <property type="entry name" value="CheY-like_superfamily"/>
</dbReference>
<dbReference type="InterPro" id="IPR036890">
    <property type="entry name" value="HATPase_C_sf"/>
</dbReference>
<dbReference type="InterPro" id="IPR005467">
    <property type="entry name" value="His_kinase_dom"/>
</dbReference>
<dbReference type="InterPro" id="IPR003661">
    <property type="entry name" value="HisK_dim/P_dom"/>
</dbReference>
<dbReference type="InterPro" id="IPR036097">
    <property type="entry name" value="HisK_dim/P_sf"/>
</dbReference>
<dbReference type="InterPro" id="IPR004358">
    <property type="entry name" value="Sig_transdc_His_kin-like_C"/>
</dbReference>
<dbReference type="InterPro" id="IPR001789">
    <property type="entry name" value="Sig_transdc_resp-reg_receiver"/>
</dbReference>
<dbReference type="NCBIfam" id="NF041945">
    <property type="entry name" value="LuxN_Vibrio"/>
    <property type="match status" value="1"/>
</dbReference>
<dbReference type="PANTHER" id="PTHR43547:SF2">
    <property type="entry name" value="HYBRID SIGNAL TRANSDUCTION HISTIDINE KINASE C"/>
    <property type="match status" value="1"/>
</dbReference>
<dbReference type="PANTHER" id="PTHR43547">
    <property type="entry name" value="TWO-COMPONENT HISTIDINE KINASE"/>
    <property type="match status" value="1"/>
</dbReference>
<dbReference type="Pfam" id="PF02518">
    <property type="entry name" value="HATPase_c"/>
    <property type="match status" value="1"/>
</dbReference>
<dbReference type="Pfam" id="PF00072">
    <property type="entry name" value="Response_reg"/>
    <property type="match status" value="1"/>
</dbReference>
<dbReference type="PRINTS" id="PR00344">
    <property type="entry name" value="BCTRLSENSOR"/>
</dbReference>
<dbReference type="SMART" id="SM00387">
    <property type="entry name" value="HATPase_c"/>
    <property type="match status" value="1"/>
</dbReference>
<dbReference type="SMART" id="SM00388">
    <property type="entry name" value="HisKA"/>
    <property type="match status" value="1"/>
</dbReference>
<dbReference type="SMART" id="SM00448">
    <property type="entry name" value="REC"/>
    <property type="match status" value="1"/>
</dbReference>
<dbReference type="SUPFAM" id="SSF55874">
    <property type="entry name" value="ATPase domain of HSP90 chaperone/DNA topoisomerase II/histidine kinase"/>
    <property type="match status" value="1"/>
</dbReference>
<dbReference type="SUPFAM" id="SSF52172">
    <property type="entry name" value="CheY-like"/>
    <property type="match status" value="1"/>
</dbReference>
<dbReference type="SUPFAM" id="SSF47384">
    <property type="entry name" value="Homodimeric domain of signal transducing histidine kinase"/>
    <property type="match status" value="1"/>
</dbReference>
<dbReference type="PROSITE" id="PS50109">
    <property type="entry name" value="HIS_KIN"/>
    <property type="match status" value="1"/>
</dbReference>
<dbReference type="PROSITE" id="PS50110">
    <property type="entry name" value="RESPONSE_REGULATORY"/>
    <property type="match status" value="1"/>
</dbReference>
<feature type="chain" id="PRO_0000074781" description="Autoinducer 1 sensor kinase/phosphatase LuxN">
    <location>
        <begin position="1"/>
        <end position="849"/>
    </location>
</feature>
<feature type="transmembrane region" description="Helical" evidence="2">
    <location>
        <begin position="9"/>
        <end position="29"/>
    </location>
</feature>
<feature type="transmembrane region" description="Helical" evidence="2">
    <location>
        <begin position="41"/>
        <end position="61"/>
    </location>
</feature>
<feature type="transmembrane region" description="Helical" evidence="2">
    <location>
        <begin position="160"/>
        <end position="180"/>
    </location>
</feature>
<feature type="transmembrane region" description="Helical" evidence="2">
    <location>
        <begin position="196"/>
        <end position="216"/>
    </location>
</feature>
<feature type="transmembrane region" description="Helical" evidence="2">
    <location>
        <begin position="220"/>
        <end position="242"/>
    </location>
</feature>
<feature type="transmembrane region" description="Helical" evidence="2">
    <location>
        <begin position="251"/>
        <end position="275"/>
    </location>
</feature>
<feature type="transmembrane region" description="Helical" evidence="2">
    <location>
        <begin position="283"/>
        <end position="301"/>
    </location>
</feature>
<feature type="domain" description="Histidine kinase" evidence="3">
    <location>
        <begin position="468"/>
        <end position="683"/>
    </location>
</feature>
<feature type="domain" description="Response regulatory" evidence="4">
    <location>
        <begin position="722"/>
        <end position="835"/>
    </location>
</feature>
<feature type="modified residue" description="Phosphohistidine; by autocatalysis" evidence="3">
    <location>
        <position position="471"/>
    </location>
</feature>
<feature type="modified residue" description="4-aspartylphosphate" evidence="4">
    <location>
        <position position="771"/>
    </location>
</feature>
<comment type="function">
    <text evidence="1">At low cell density, in the absence of AI-1 (autoinducer 1), LuxN has a kinase activity and autophosphorylates on His-471. The phosphoryl group is then transferred on Asp-771 of the response regulator domain. The phosphoryl group is transferred to LuxU, and ultimately to LuxO. At high cell density, in the presence of AI-1, the kinase activity is inactivated, and the response regulator domain has a phosphatase activity. LuxN phosphatase acts on itself. As LuxU could function to establish an equilibrium between the aspartyl-phosphate of LuxN and the aspartyl-phosphate of LuxO, LuxU transfers phosphate from LuxO to LuxN and finally phosphate is drained from the system (By similarity).</text>
</comment>
<comment type="catalytic activity">
    <reaction>
        <text>ATP + protein L-histidine = ADP + protein N-phospho-L-histidine.</text>
        <dbReference type="EC" id="2.7.13.3"/>
    </reaction>
</comment>
<comment type="subcellular location">
    <subcellularLocation>
        <location evidence="1">Cell inner membrane</location>
        <topology evidence="1">Multi-pass membrane protein</topology>
    </subcellularLocation>
</comment>
<reference key="1">
    <citation type="journal article" date="1993" name="Mol. Microbiol.">
        <title>Intercellular signalling in Vibrio harveyi: sequence and function of genes regulating expression of luminescence.</title>
        <authorList>
            <person name="Bassler B.L."/>
            <person name="Wright M.E."/>
            <person name="Showalter R.E."/>
            <person name="Silverman M.R."/>
        </authorList>
    </citation>
    <scope>NUCLEOTIDE SEQUENCE [GENOMIC DNA]</scope>
    <source>
        <strain>BB7</strain>
    </source>
</reference>
<sequence>MFDFSLEAIVYAKAISLLATVAVVMMWLFYYCYRLKQKNEVIFGTHHAAYIAYSVCIIAWISSNAYFHTDLLPELGASAGMFMAKFANLASFFAFAFAYYFSCQLAAEQRKGKVHRWQQGIFVSLTVYSLFINLRPGLTVEHVDIVGPSQFIIEFGPHTSYFFIGLVSFVVLTLVNLVAMRTNSSKLTLAKTNYMIAGILVFMLSTAVIHLGMTYFMGDFSLTWLPPALSISEMLFVGYALLTSRFYSVKYIAYLALSVLLVCAIFVLPLGAIFIPLTESNQWLIAIPICALIGITWQLLYKKTSRYASFLIYGDKKTPVQQILSLEEDFKLSIDDAMRRLGKLLQIPNDKLRLVTSNYNETFYEEYLSSNRSVLVFDELSEELEYKVSAKRSMKALYDKMSSNNTALVMPLFGQGKSVTHLLISPHKSNNQMFSNEEISAVQTLLTRVQSTIEADRRIRQSRALANSIAHEMRNPLAQVQLQFEALKQHIENHAPVEQITLDIENGQAAIQRGRQLIDIILREVSDSSPEHEPIAMTSIHKAVDQAVSHYGFENEKIIERIRLPQHTDFVAKLNETLFNFVIFNLIRNAIYYFDSYPDSQIEISTKTGPYENTLIFRDTGPGIDETISHKIFDDFFSYQKSGGSGLGLGYCQRVMRSFGGRIECKSKLGTFTEFHLYFPVVPNAPKADTLRTPYFNDWKQNKRSNEHKVAPNVQINNQSPTVLIVDDKEVQRALVQMYLNQLGVNSLQANNGENAVEVFKANHVDLILMDVQMPVMNGFDASQRIKELSPQTPIVALSGESGERELDMINKLMDGRLEKPTTLNALRHVLGNWLNKNTASSACEAERE</sequence>
<name>LUXN_VIBHA</name>
<accession>P0C5S6</accession>
<accession>P54301</accession>
<protein>
    <recommendedName>
        <fullName>Autoinducer 1 sensor kinase/phosphatase LuxN</fullName>
        <ecNumber>2.7.13.3</ecNumber>
        <ecNumber>3.1.3.-</ecNumber>
    </recommendedName>
</protein>
<proteinExistence type="inferred from homology"/>
<evidence type="ECO:0000250" key="1"/>
<evidence type="ECO:0000255" key="2"/>
<evidence type="ECO:0000255" key="3">
    <source>
        <dbReference type="PROSITE-ProRule" id="PRU00107"/>
    </source>
</evidence>
<evidence type="ECO:0000255" key="4">
    <source>
        <dbReference type="PROSITE-ProRule" id="PRU00169"/>
    </source>
</evidence>